<sequence length="425" mass="47242">MIDLRLLREDPDRVRASQRARGEDVALVDSLLSADERRRSSGVRFDELRSEQKALGKLIPKASPEERAELLKKAEQLKADVKAADVEQHEADEEAKRLLLQLGNLVHPDVPVGGEEDFVVLETHGTIRDFGAEGFEPKDHLELGEALGAIDVERGAKVSGSRFYYLTGVGALLELALVNAAIAQATEAGFIPMLTPALVRPRAMEGTGFLGQASENVYHLEKDDYYLVGTSEVPLAAYHMDEILDADKLPMRYAGFSPCFRREAGTYGKDTRGIFRVHQFDKVEMFSYVAPEDAENEHKRLLEWEKQWLTGLELPFQVIDVASGDLGASATRKFDCEAWIPTQGKYRELTSASNCDSFQARRLSVRMRDGKKVQPLATLNGTLCAVPRTIVAILENHQLPDGSVRVPEMLRPYLGGRELLEPVAK</sequence>
<protein>
    <recommendedName>
        <fullName evidence="1">Serine--tRNA ligase 1</fullName>
        <ecNumber evidence="1">6.1.1.11</ecNumber>
    </recommendedName>
    <alternativeName>
        <fullName evidence="1">Seryl-tRNA synthetase 1</fullName>
        <shortName evidence="1">SerRS 1</shortName>
    </alternativeName>
    <alternativeName>
        <fullName evidence="1">Seryl-tRNA(Ser/Sec) synthetase 1</fullName>
    </alternativeName>
</protein>
<gene>
    <name evidence="1" type="primary">serS1</name>
    <name type="ordered locus">SAV_4244</name>
</gene>
<comment type="function">
    <text evidence="1">Catalyzes the attachment of serine to tRNA(Ser). Is also able to aminoacylate tRNA(Sec) with serine, to form the misacylated tRNA L-seryl-tRNA(Sec), which will be further converted into selenocysteinyl-tRNA(Sec).</text>
</comment>
<comment type="catalytic activity">
    <reaction evidence="1">
        <text>tRNA(Ser) + L-serine + ATP = L-seryl-tRNA(Ser) + AMP + diphosphate + H(+)</text>
        <dbReference type="Rhea" id="RHEA:12292"/>
        <dbReference type="Rhea" id="RHEA-COMP:9669"/>
        <dbReference type="Rhea" id="RHEA-COMP:9703"/>
        <dbReference type="ChEBI" id="CHEBI:15378"/>
        <dbReference type="ChEBI" id="CHEBI:30616"/>
        <dbReference type="ChEBI" id="CHEBI:33019"/>
        <dbReference type="ChEBI" id="CHEBI:33384"/>
        <dbReference type="ChEBI" id="CHEBI:78442"/>
        <dbReference type="ChEBI" id="CHEBI:78533"/>
        <dbReference type="ChEBI" id="CHEBI:456215"/>
        <dbReference type="EC" id="6.1.1.11"/>
    </reaction>
</comment>
<comment type="catalytic activity">
    <reaction evidence="1">
        <text>tRNA(Sec) + L-serine + ATP = L-seryl-tRNA(Sec) + AMP + diphosphate + H(+)</text>
        <dbReference type="Rhea" id="RHEA:42580"/>
        <dbReference type="Rhea" id="RHEA-COMP:9742"/>
        <dbReference type="Rhea" id="RHEA-COMP:10128"/>
        <dbReference type="ChEBI" id="CHEBI:15378"/>
        <dbReference type="ChEBI" id="CHEBI:30616"/>
        <dbReference type="ChEBI" id="CHEBI:33019"/>
        <dbReference type="ChEBI" id="CHEBI:33384"/>
        <dbReference type="ChEBI" id="CHEBI:78442"/>
        <dbReference type="ChEBI" id="CHEBI:78533"/>
        <dbReference type="ChEBI" id="CHEBI:456215"/>
        <dbReference type="EC" id="6.1.1.11"/>
    </reaction>
</comment>
<comment type="pathway">
    <text evidence="1">Aminoacyl-tRNA biosynthesis; selenocysteinyl-tRNA(Sec) biosynthesis; L-seryl-tRNA(Sec) from L-serine and tRNA(Sec): step 1/1.</text>
</comment>
<comment type="subunit">
    <text evidence="1">Homodimer. The tRNA molecule binds across the dimer.</text>
</comment>
<comment type="subcellular location">
    <subcellularLocation>
        <location evidence="1">Cytoplasm</location>
    </subcellularLocation>
</comment>
<comment type="domain">
    <text evidence="1">Consists of two distinct domains, a catalytic core and a N-terminal extension that is involved in tRNA binding.</text>
</comment>
<comment type="similarity">
    <text evidence="1">Belongs to the class-II aminoacyl-tRNA synthetase family. Type-1 seryl-tRNA synthetase subfamily.</text>
</comment>
<reference key="1">
    <citation type="journal article" date="2001" name="Proc. Natl. Acad. Sci. U.S.A.">
        <title>Genome sequence of an industrial microorganism Streptomyces avermitilis: deducing the ability of producing secondary metabolites.</title>
        <authorList>
            <person name="Omura S."/>
            <person name="Ikeda H."/>
            <person name="Ishikawa J."/>
            <person name="Hanamoto A."/>
            <person name="Takahashi C."/>
            <person name="Shinose M."/>
            <person name="Takahashi Y."/>
            <person name="Horikawa H."/>
            <person name="Nakazawa H."/>
            <person name="Osonoe T."/>
            <person name="Kikuchi H."/>
            <person name="Shiba T."/>
            <person name="Sakaki Y."/>
            <person name="Hattori M."/>
        </authorList>
    </citation>
    <scope>NUCLEOTIDE SEQUENCE [LARGE SCALE GENOMIC DNA]</scope>
    <source>
        <strain>ATCC 31267 / DSM 46492 / JCM 5070 / NBRC 14893 / NCIMB 12804 / NRRL 8165 / MA-4680</strain>
    </source>
</reference>
<reference key="2">
    <citation type="journal article" date="2003" name="Nat. Biotechnol.">
        <title>Complete genome sequence and comparative analysis of the industrial microorganism Streptomyces avermitilis.</title>
        <authorList>
            <person name="Ikeda H."/>
            <person name="Ishikawa J."/>
            <person name="Hanamoto A."/>
            <person name="Shinose M."/>
            <person name="Kikuchi H."/>
            <person name="Shiba T."/>
            <person name="Sakaki Y."/>
            <person name="Hattori M."/>
            <person name="Omura S."/>
        </authorList>
    </citation>
    <scope>NUCLEOTIDE SEQUENCE [LARGE SCALE GENOMIC DNA]</scope>
    <source>
        <strain>ATCC 31267 / DSM 46492 / JCM 5070 / NBRC 14893 / NCIMB 12804 / NRRL 8165 / MA-4680</strain>
    </source>
</reference>
<evidence type="ECO:0000255" key="1">
    <source>
        <dbReference type="HAMAP-Rule" id="MF_00176"/>
    </source>
</evidence>
<accession>Q82FK8</accession>
<keyword id="KW-0030">Aminoacyl-tRNA synthetase</keyword>
<keyword id="KW-0067">ATP-binding</keyword>
<keyword id="KW-0963">Cytoplasm</keyword>
<keyword id="KW-0436">Ligase</keyword>
<keyword id="KW-0547">Nucleotide-binding</keyword>
<keyword id="KW-0648">Protein biosynthesis</keyword>
<keyword id="KW-1185">Reference proteome</keyword>
<name>SYS1_STRAW</name>
<organism>
    <name type="scientific">Streptomyces avermitilis (strain ATCC 31267 / DSM 46492 / JCM 5070 / NBRC 14893 / NCIMB 12804 / NRRL 8165 / MA-4680)</name>
    <dbReference type="NCBI Taxonomy" id="227882"/>
    <lineage>
        <taxon>Bacteria</taxon>
        <taxon>Bacillati</taxon>
        <taxon>Actinomycetota</taxon>
        <taxon>Actinomycetes</taxon>
        <taxon>Kitasatosporales</taxon>
        <taxon>Streptomycetaceae</taxon>
        <taxon>Streptomyces</taxon>
    </lineage>
</organism>
<dbReference type="EC" id="6.1.1.11" evidence="1"/>
<dbReference type="EMBL" id="BA000030">
    <property type="protein sequence ID" value="BAC71956.1"/>
    <property type="molecule type" value="Genomic_DNA"/>
</dbReference>
<dbReference type="SMR" id="Q82FK8"/>
<dbReference type="GeneID" id="41541325"/>
<dbReference type="KEGG" id="sma:SAVERM_4244"/>
<dbReference type="eggNOG" id="COG0172">
    <property type="taxonomic scope" value="Bacteria"/>
</dbReference>
<dbReference type="HOGENOM" id="CLU_023797_0_1_11"/>
<dbReference type="OrthoDB" id="9804647at2"/>
<dbReference type="UniPathway" id="UPA00906">
    <property type="reaction ID" value="UER00895"/>
</dbReference>
<dbReference type="Proteomes" id="UP000000428">
    <property type="component" value="Chromosome"/>
</dbReference>
<dbReference type="GO" id="GO:0005737">
    <property type="term" value="C:cytoplasm"/>
    <property type="evidence" value="ECO:0007669"/>
    <property type="project" value="UniProtKB-SubCell"/>
</dbReference>
<dbReference type="GO" id="GO:0005524">
    <property type="term" value="F:ATP binding"/>
    <property type="evidence" value="ECO:0007669"/>
    <property type="project" value="UniProtKB-UniRule"/>
</dbReference>
<dbReference type="GO" id="GO:0004828">
    <property type="term" value="F:serine-tRNA ligase activity"/>
    <property type="evidence" value="ECO:0007669"/>
    <property type="project" value="UniProtKB-UniRule"/>
</dbReference>
<dbReference type="GO" id="GO:0016260">
    <property type="term" value="P:selenocysteine biosynthetic process"/>
    <property type="evidence" value="ECO:0007669"/>
    <property type="project" value="UniProtKB-UniRule"/>
</dbReference>
<dbReference type="GO" id="GO:0006434">
    <property type="term" value="P:seryl-tRNA aminoacylation"/>
    <property type="evidence" value="ECO:0007669"/>
    <property type="project" value="UniProtKB-UniRule"/>
</dbReference>
<dbReference type="CDD" id="cd00770">
    <property type="entry name" value="SerRS_core"/>
    <property type="match status" value="1"/>
</dbReference>
<dbReference type="FunFam" id="1.10.287.40:FF:000004">
    <property type="entry name" value="Serine--tRNA ligase"/>
    <property type="match status" value="1"/>
</dbReference>
<dbReference type="FunFam" id="3.30.930.10:FF:000048">
    <property type="entry name" value="Serine--tRNA ligase"/>
    <property type="match status" value="1"/>
</dbReference>
<dbReference type="Gene3D" id="3.30.930.10">
    <property type="entry name" value="Bira Bifunctional Protein, Domain 2"/>
    <property type="match status" value="1"/>
</dbReference>
<dbReference type="Gene3D" id="1.10.287.40">
    <property type="entry name" value="Serine-tRNA synthetase, tRNA binding domain"/>
    <property type="match status" value="1"/>
</dbReference>
<dbReference type="HAMAP" id="MF_00176">
    <property type="entry name" value="Ser_tRNA_synth_type1"/>
    <property type="match status" value="1"/>
</dbReference>
<dbReference type="InterPro" id="IPR002314">
    <property type="entry name" value="aa-tRNA-synt_IIb"/>
</dbReference>
<dbReference type="InterPro" id="IPR006195">
    <property type="entry name" value="aa-tRNA-synth_II"/>
</dbReference>
<dbReference type="InterPro" id="IPR045864">
    <property type="entry name" value="aa-tRNA-synth_II/BPL/LPL"/>
</dbReference>
<dbReference type="InterPro" id="IPR002317">
    <property type="entry name" value="Ser-tRNA-ligase_type_1"/>
</dbReference>
<dbReference type="InterPro" id="IPR015866">
    <property type="entry name" value="Ser-tRNA-synth_1_N"/>
</dbReference>
<dbReference type="InterPro" id="IPR042103">
    <property type="entry name" value="SerRS_1_N_sf"/>
</dbReference>
<dbReference type="InterPro" id="IPR033729">
    <property type="entry name" value="SerRS_core"/>
</dbReference>
<dbReference type="InterPro" id="IPR010978">
    <property type="entry name" value="tRNA-bd_arm"/>
</dbReference>
<dbReference type="NCBIfam" id="TIGR00414">
    <property type="entry name" value="serS"/>
    <property type="match status" value="1"/>
</dbReference>
<dbReference type="PANTHER" id="PTHR11778">
    <property type="entry name" value="SERYL-TRNA SYNTHETASE"/>
    <property type="match status" value="1"/>
</dbReference>
<dbReference type="Pfam" id="PF02403">
    <property type="entry name" value="Seryl_tRNA_N"/>
    <property type="match status" value="1"/>
</dbReference>
<dbReference type="Pfam" id="PF00587">
    <property type="entry name" value="tRNA-synt_2b"/>
    <property type="match status" value="1"/>
</dbReference>
<dbReference type="PIRSF" id="PIRSF001529">
    <property type="entry name" value="Ser-tRNA-synth_IIa"/>
    <property type="match status" value="1"/>
</dbReference>
<dbReference type="PRINTS" id="PR00981">
    <property type="entry name" value="TRNASYNTHSER"/>
</dbReference>
<dbReference type="SUPFAM" id="SSF55681">
    <property type="entry name" value="Class II aaRS and biotin synthetases"/>
    <property type="match status" value="1"/>
</dbReference>
<dbReference type="SUPFAM" id="SSF46589">
    <property type="entry name" value="tRNA-binding arm"/>
    <property type="match status" value="1"/>
</dbReference>
<dbReference type="PROSITE" id="PS50862">
    <property type="entry name" value="AA_TRNA_LIGASE_II"/>
    <property type="match status" value="1"/>
</dbReference>
<proteinExistence type="inferred from homology"/>
<feature type="chain" id="PRO_0000122129" description="Serine--tRNA ligase 1">
    <location>
        <begin position="1"/>
        <end position="425"/>
    </location>
</feature>
<feature type="binding site" evidence="1">
    <location>
        <begin position="230"/>
        <end position="232"/>
    </location>
    <ligand>
        <name>L-serine</name>
        <dbReference type="ChEBI" id="CHEBI:33384"/>
    </ligand>
</feature>
<feature type="binding site" evidence="1">
    <location>
        <begin position="261"/>
        <end position="263"/>
    </location>
    <ligand>
        <name>ATP</name>
        <dbReference type="ChEBI" id="CHEBI:30616"/>
    </ligand>
</feature>
<feature type="binding site" evidence="1">
    <location>
        <position position="277"/>
    </location>
    <ligand>
        <name>ATP</name>
        <dbReference type="ChEBI" id="CHEBI:30616"/>
    </ligand>
</feature>
<feature type="binding site" evidence="1">
    <location>
        <position position="284"/>
    </location>
    <ligand>
        <name>L-serine</name>
        <dbReference type="ChEBI" id="CHEBI:33384"/>
    </ligand>
</feature>
<feature type="binding site" evidence="1">
    <location>
        <begin position="348"/>
        <end position="351"/>
    </location>
    <ligand>
        <name>ATP</name>
        <dbReference type="ChEBI" id="CHEBI:30616"/>
    </ligand>
</feature>
<feature type="binding site" evidence="1">
    <location>
        <position position="382"/>
    </location>
    <ligand>
        <name>L-serine</name>
        <dbReference type="ChEBI" id="CHEBI:33384"/>
    </ligand>
</feature>